<protein>
    <recommendedName>
        <fullName>Melanocyte-stimulating hormone receptor</fullName>
        <shortName>MSH-R</shortName>
    </recommendedName>
    <alternativeName>
        <fullName>Melanocortin receptor 1</fullName>
        <shortName>MC1-R</shortName>
    </alternativeName>
</protein>
<evidence type="ECO:0000250" key="1">
    <source>
        <dbReference type="UniProtKB" id="Q01726"/>
    </source>
</evidence>
<evidence type="ECO:0000255" key="2"/>
<evidence type="ECO:0000255" key="3">
    <source>
        <dbReference type="PROSITE-ProRule" id="PRU00521"/>
    </source>
</evidence>
<sequence length="317" mass="34824">MAVQGFQRRLLGSLNSTPTAIPQLGLAANQTGARCLEVSIPDGLFLSLGLVSLVENVLVVATIAKNRNLHSPTYCFICCLALSDLLVSGGNVLETVVILLLEASALAARAAVVQPLDNVIDVITCSSMVSSLCFLGAIAMDRYVSIFYALRYHSIVTLPRARQAIAAIWVASVLFSTLFIAYYDHAAVLLCLVVFFLAMLVLMAVLYVHMLARACQHAQGIARLHKRQRPLHQGFGLKGAVTLTILLGIFFLCWGPFFLHLTLIVLCPQHPTCSCIFKNFNLFLTLIICNAIIDPLIYAFRRQELRRTLKEGLTCSW</sequence>
<dbReference type="EMBL" id="AY205089">
    <property type="protein sequence ID" value="AAP30963.1"/>
    <property type="molecule type" value="Genomic_DNA"/>
</dbReference>
<dbReference type="EMBL" id="AB296235">
    <property type="protein sequence ID" value="BAF48467.1"/>
    <property type="molecule type" value="Genomic_DNA"/>
</dbReference>
<dbReference type="SMR" id="Q864K8"/>
<dbReference type="GlyCosmos" id="Q864K8">
    <property type="glycosylation" value="1 site, No reported glycans"/>
</dbReference>
<dbReference type="GO" id="GO:0005886">
    <property type="term" value="C:plasma membrane"/>
    <property type="evidence" value="ECO:0000250"/>
    <property type="project" value="UniProtKB"/>
</dbReference>
<dbReference type="GO" id="GO:0004980">
    <property type="term" value="F:melanocyte-stimulating hormone receptor activity"/>
    <property type="evidence" value="ECO:0007669"/>
    <property type="project" value="InterPro"/>
</dbReference>
<dbReference type="GO" id="GO:0007189">
    <property type="term" value="P:adenylate cyclase-activating G protein-coupled receptor signaling pathway"/>
    <property type="evidence" value="ECO:0007669"/>
    <property type="project" value="UniProtKB-ARBA"/>
</dbReference>
<dbReference type="CDD" id="cd15351">
    <property type="entry name" value="7tmA_MC1R"/>
    <property type="match status" value="1"/>
</dbReference>
<dbReference type="FunFam" id="1.20.1070.10:FF:000211">
    <property type="entry name" value="Melanocyte-stimulating hormone receptor"/>
    <property type="match status" value="1"/>
</dbReference>
<dbReference type="Gene3D" id="1.20.1070.10">
    <property type="entry name" value="Rhodopsin 7-helix transmembrane proteins"/>
    <property type="match status" value="1"/>
</dbReference>
<dbReference type="InterPro" id="IPR000276">
    <property type="entry name" value="GPCR_Rhodpsn"/>
</dbReference>
<dbReference type="InterPro" id="IPR017452">
    <property type="entry name" value="GPCR_Rhodpsn_7TM"/>
</dbReference>
<dbReference type="InterPro" id="IPR001671">
    <property type="entry name" value="Melcrt_ACTH_rcpt"/>
</dbReference>
<dbReference type="InterPro" id="IPR000761">
    <property type="entry name" value="MSH_rcpt"/>
</dbReference>
<dbReference type="PANTHER" id="PTHR22750">
    <property type="entry name" value="G-PROTEIN COUPLED RECEPTOR"/>
    <property type="match status" value="1"/>
</dbReference>
<dbReference type="Pfam" id="PF00001">
    <property type="entry name" value="7tm_1"/>
    <property type="match status" value="1"/>
</dbReference>
<dbReference type="PRINTS" id="PR00237">
    <property type="entry name" value="GPCRRHODOPSN"/>
</dbReference>
<dbReference type="PRINTS" id="PR00534">
    <property type="entry name" value="MCRFAMILY"/>
</dbReference>
<dbReference type="PRINTS" id="PR00536">
    <property type="entry name" value="MELNOCYTESHR"/>
</dbReference>
<dbReference type="SMART" id="SM01381">
    <property type="entry name" value="7TM_GPCR_Srsx"/>
    <property type="match status" value="1"/>
</dbReference>
<dbReference type="SUPFAM" id="SSF81321">
    <property type="entry name" value="Family A G protein-coupled receptor-like"/>
    <property type="match status" value="1"/>
</dbReference>
<dbReference type="PROSITE" id="PS00237">
    <property type="entry name" value="G_PROTEIN_RECEP_F1_1"/>
    <property type="match status" value="1"/>
</dbReference>
<dbReference type="PROSITE" id="PS50262">
    <property type="entry name" value="G_PROTEIN_RECEP_F1_2"/>
    <property type="match status" value="1"/>
</dbReference>
<feature type="chain" id="PRO_0000069820" description="Melanocyte-stimulating hormone receptor">
    <location>
        <begin position="1"/>
        <end position="317"/>
    </location>
</feature>
<feature type="topological domain" description="Extracellular" evidence="2">
    <location>
        <begin position="1"/>
        <end position="37"/>
    </location>
</feature>
<feature type="transmembrane region" description="Helical; Name=1" evidence="2">
    <location>
        <begin position="38"/>
        <end position="63"/>
    </location>
</feature>
<feature type="topological domain" description="Cytoplasmic" evidence="2">
    <location>
        <begin position="64"/>
        <end position="72"/>
    </location>
</feature>
<feature type="transmembrane region" description="Helical; Name=2" evidence="2">
    <location>
        <begin position="73"/>
        <end position="93"/>
    </location>
</feature>
<feature type="topological domain" description="Extracellular" evidence="2">
    <location>
        <begin position="94"/>
        <end position="118"/>
    </location>
</feature>
<feature type="transmembrane region" description="Helical; Name=3" evidence="2">
    <location>
        <begin position="119"/>
        <end position="140"/>
    </location>
</feature>
<feature type="topological domain" description="Cytoplasmic" evidence="2">
    <location>
        <begin position="141"/>
        <end position="163"/>
    </location>
</feature>
<feature type="transmembrane region" description="Helical; Name=4" evidence="2">
    <location>
        <begin position="164"/>
        <end position="183"/>
    </location>
</feature>
<feature type="topological domain" description="Extracellular" evidence="2">
    <location>
        <begin position="184"/>
        <end position="191"/>
    </location>
</feature>
<feature type="transmembrane region" description="Helical; Name=5" evidence="2">
    <location>
        <begin position="192"/>
        <end position="211"/>
    </location>
</feature>
<feature type="topological domain" description="Cytoplasmic" evidence="2">
    <location>
        <begin position="212"/>
        <end position="240"/>
    </location>
</feature>
<feature type="transmembrane region" description="Helical; Name=6" evidence="2">
    <location>
        <begin position="241"/>
        <end position="266"/>
    </location>
</feature>
<feature type="topological domain" description="Extracellular" evidence="2">
    <location>
        <begin position="267"/>
        <end position="279"/>
    </location>
</feature>
<feature type="transmembrane region" description="Helical; Name=7" evidence="2">
    <location>
        <begin position="280"/>
        <end position="300"/>
    </location>
</feature>
<feature type="topological domain" description="Cytoplasmic" evidence="2">
    <location>
        <begin position="301"/>
        <end position="317"/>
    </location>
</feature>
<feature type="lipid moiety-binding region" description="S-palmitoyl cysteine" evidence="2">
    <location>
        <position position="315"/>
    </location>
</feature>
<feature type="glycosylation site" description="N-linked (GlcNAc...) asparagine" evidence="2">
    <location>
        <position position="29"/>
    </location>
</feature>
<proteinExistence type="inferred from homology"/>
<comment type="function">
    <text evidence="1">Receptor for MSH (alpha, beta and gamma) and ACTH. The activity of this receptor is mediated by G proteins which activate adenylate cyclase. Mediates melanogenesis, the production of eumelanin (black/brown) and phaeomelanin (red/yellow), via regulation of cAMP signaling in melanocytes.</text>
</comment>
<comment type="subunit">
    <text evidence="1">Interacts with MGRN1, but does not undergo MGRN1-mediated ubiquitination; this interaction competes with GNAS-binding and thus inhibits agonist-induced cAMP production. Interacts with OPN3; the interaction results in a decrease in MC1R-mediated cAMP signaling and ultimately a decrease in melanin production in melanocytes.</text>
</comment>
<comment type="subcellular location">
    <subcellularLocation>
        <location evidence="1">Cell membrane</location>
        <topology evidence="2">Multi-pass membrane protein</topology>
    </subcellularLocation>
</comment>
<comment type="similarity">
    <text evidence="3">Belongs to the G-protein coupled receptor 1 family.</text>
</comment>
<organism>
    <name type="scientific">Hylobates lar</name>
    <name type="common">Lar gibbon</name>
    <name type="synonym">White-handed gibbon</name>
    <dbReference type="NCBI Taxonomy" id="9580"/>
    <lineage>
        <taxon>Eukaryota</taxon>
        <taxon>Metazoa</taxon>
        <taxon>Chordata</taxon>
        <taxon>Craniata</taxon>
        <taxon>Vertebrata</taxon>
        <taxon>Euteleostomi</taxon>
        <taxon>Mammalia</taxon>
        <taxon>Eutheria</taxon>
        <taxon>Euarchontoglires</taxon>
        <taxon>Primates</taxon>
        <taxon>Haplorrhini</taxon>
        <taxon>Catarrhini</taxon>
        <taxon>Hylobatidae</taxon>
        <taxon>Hylobates</taxon>
    </lineage>
</organism>
<keyword id="KW-1003">Cell membrane</keyword>
<keyword id="KW-0297">G-protein coupled receptor</keyword>
<keyword id="KW-0325">Glycoprotein</keyword>
<keyword id="KW-0449">Lipoprotein</keyword>
<keyword id="KW-0472">Membrane</keyword>
<keyword id="KW-0564">Palmitate</keyword>
<keyword id="KW-0675">Receptor</keyword>
<keyword id="KW-0807">Transducer</keyword>
<keyword id="KW-0812">Transmembrane</keyword>
<keyword id="KW-1133">Transmembrane helix</keyword>
<gene>
    <name type="primary">MC1R</name>
</gene>
<name>MSHR_HYLLA</name>
<reference key="1">
    <citation type="journal article" date="2003" name="Am. J. Phys. Anthropol.">
        <title>Evolution of a pigmentation gene, the melanocortin-1 receptor, in primates.</title>
        <authorList>
            <person name="Mundy N.I."/>
            <person name="Kelly J."/>
        </authorList>
    </citation>
    <scope>NUCLEOTIDE SEQUENCE [GENOMIC DNA]</scope>
    <source>
        <strain>Isolate 1</strain>
    </source>
</reference>
<reference key="2">
    <citation type="journal article" date="2008" name="Am. J. Primatol.">
        <title>Variation of the melanocortin 1 receptor gene in the macaques.</title>
        <authorList>
            <person name="Nakayama K."/>
            <person name="Shotake T."/>
            <person name="Takeneka O."/>
            <person name="Ishida T."/>
        </authorList>
    </citation>
    <scope>NUCLEOTIDE SEQUENCE [GENOMIC DNA]</scope>
</reference>
<accession>Q864K8</accession>
<accession>A3KFA4</accession>